<protein>
    <recommendedName>
        <fullName evidence="1">Methylthioribose-1-phosphate isomerase</fullName>
        <shortName evidence="1">M1Pi</shortName>
        <shortName evidence="1">MTR-1-P isomerase</shortName>
        <ecNumber evidence="1">5.3.1.23</ecNumber>
    </recommendedName>
    <alternativeName>
        <fullName evidence="1">S-methyl-5-thioribose-1-phosphate isomerase</fullName>
    </alternativeName>
</protein>
<comment type="function">
    <text evidence="1">Catalyzes the interconversion of methylthioribose-1-phosphate (MTR-1-P) into methylthioribulose-1-phosphate (MTRu-1-P).</text>
</comment>
<comment type="catalytic activity">
    <reaction evidence="1">
        <text>5-(methylsulfanyl)-alpha-D-ribose 1-phosphate = 5-(methylsulfanyl)-D-ribulose 1-phosphate</text>
        <dbReference type="Rhea" id="RHEA:19989"/>
        <dbReference type="ChEBI" id="CHEBI:58533"/>
        <dbReference type="ChEBI" id="CHEBI:58548"/>
        <dbReference type="EC" id="5.3.1.23"/>
    </reaction>
</comment>
<comment type="pathway">
    <text evidence="1">Amino-acid biosynthesis; L-methionine biosynthesis via salvage pathway; L-methionine from S-methyl-5-thio-alpha-D-ribose 1-phosphate: step 1/6.</text>
</comment>
<comment type="similarity">
    <text evidence="2">Belongs to the eIF-2B alpha/beta/delta subunits family. MtnA subfamily.</text>
</comment>
<proteinExistence type="inferred from homology"/>
<organism>
    <name type="scientific">Leptospira borgpetersenii serovar Hardjo-bovis (strain JB197)</name>
    <dbReference type="NCBI Taxonomy" id="355277"/>
    <lineage>
        <taxon>Bacteria</taxon>
        <taxon>Pseudomonadati</taxon>
        <taxon>Spirochaetota</taxon>
        <taxon>Spirochaetia</taxon>
        <taxon>Leptospirales</taxon>
        <taxon>Leptospiraceae</taxon>
        <taxon>Leptospira</taxon>
    </lineage>
</organism>
<accession>Q04RD6</accession>
<feature type="chain" id="PRO_0000357200" description="Methylthioribose-1-phosphate isomerase">
    <location>
        <begin position="1"/>
        <end position="362"/>
    </location>
</feature>
<feature type="active site" description="Proton donor" evidence="1">
    <location>
        <position position="242"/>
    </location>
</feature>
<feature type="binding site" evidence="1">
    <location>
        <begin position="49"/>
        <end position="51"/>
    </location>
    <ligand>
        <name>substrate</name>
    </ligand>
</feature>
<feature type="binding site" evidence="1">
    <location>
        <position position="89"/>
    </location>
    <ligand>
        <name>substrate</name>
    </ligand>
</feature>
<feature type="binding site" evidence="1">
    <location>
        <position position="201"/>
    </location>
    <ligand>
        <name>substrate</name>
    </ligand>
</feature>
<feature type="binding site" evidence="1">
    <location>
        <begin position="252"/>
        <end position="253"/>
    </location>
    <ligand>
        <name>substrate</name>
    </ligand>
</feature>
<feature type="site" description="Transition state stabilizer" evidence="1">
    <location>
        <position position="162"/>
    </location>
</feature>
<gene>
    <name evidence="1" type="primary">mtnA</name>
    <name type="ordered locus">LBJ_2026</name>
</gene>
<reference key="1">
    <citation type="journal article" date="2006" name="Proc. Natl. Acad. Sci. U.S.A.">
        <title>Genome reduction in Leptospira borgpetersenii reflects limited transmission potential.</title>
        <authorList>
            <person name="Bulach D.M."/>
            <person name="Zuerner R.L."/>
            <person name="Wilson P."/>
            <person name="Seemann T."/>
            <person name="McGrath A."/>
            <person name="Cullen P.A."/>
            <person name="Davis J."/>
            <person name="Johnson M."/>
            <person name="Kuczek E."/>
            <person name="Alt D.P."/>
            <person name="Peterson-Burch B."/>
            <person name="Coppel R.L."/>
            <person name="Rood J.I."/>
            <person name="Davies J.K."/>
            <person name="Adler B."/>
        </authorList>
    </citation>
    <scope>NUCLEOTIDE SEQUENCE [LARGE SCALE GENOMIC DNA]</scope>
    <source>
        <strain>JB197</strain>
    </source>
</reference>
<sequence length="362" mass="39465">MQESGLKPILWTNKELILLDQRVLPGTTSYLKAKTLEDCIFAIREMVVRGAPAIAITGAFGIALYLNGLSSQPTFSQLKTKLDELLESRPTAVNLRLVIEEFFSRFPEADYSSANLEKMQKSAEEFALFMLEEDLENNLTLSKNALSLFPKSPSSLNIITHCNTGALATAGHGTALGVIRSLRDAGHSLTVFADETRPYLQGARLTAWELKEEGIPSYLITDNMAGWVMSSRKIHAVIVGADRIASNGDTANKIGTYPLAIIAKHHGVPFYVAATSKSMDFRIPDGSHIPIEMRKENEVTSFGFLKDATGKPLLNEGVLAPNGIKALNPSFDVTPASLISGIITERGIISPVTEENLRKTFS</sequence>
<evidence type="ECO:0000255" key="1">
    <source>
        <dbReference type="HAMAP-Rule" id="MF_01678"/>
    </source>
</evidence>
<evidence type="ECO:0000305" key="2"/>
<keyword id="KW-0028">Amino-acid biosynthesis</keyword>
<keyword id="KW-0413">Isomerase</keyword>
<keyword id="KW-0486">Methionine biosynthesis</keyword>
<dbReference type="EC" id="5.3.1.23" evidence="1"/>
<dbReference type="EMBL" id="CP000350">
    <property type="protein sequence ID" value="ABJ76534.1"/>
    <property type="molecule type" value="Genomic_DNA"/>
</dbReference>
<dbReference type="RefSeq" id="WP_011669829.1">
    <property type="nucleotide sequence ID" value="NC_008510.1"/>
</dbReference>
<dbReference type="SMR" id="Q04RD6"/>
<dbReference type="GeneID" id="61173658"/>
<dbReference type="KEGG" id="lbj:LBJ_2026"/>
<dbReference type="HOGENOM" id="CLU_016218_1_2_12"/>
<dbReference type="UniPathway" id="UPA00904">
    <property type="reaction ID" value="UER00874"/>
</dbReference>
<dbReference type="Proteomes" id="UP000000656">
    <property type="component" value="Chromosome 1"/>
</dbReference>
<dbReference type="GO" id="GO:0046523">
    <property type="term" value="F:S-methyl-5-thioribose-1-phosphate isomerase activity"/>
    <property type="evidence" value="ECO:0007669"/>
    <property type="project" value="UniProtKB-UniRule"/>
</dbReference>
<dbReference type="GO" id="GO:0019509">
    <property type="term" value="P:L-methionine salvage from methylthioadenosine"/>
    <property type="evidence" value="ECO:0007669"/>
    <property type="project" value="UniProtKB-UniRule"/>
</dbReference>
<dbReference type="FunFam" id="1.20.120.420:FF:000003">
    <property type="entry name" value="Methylthioribose-1-phosphate isomerase"/>
    <property type="match status" value="1"/>
</dbReference>
<dbReference type="FunFam" id="3.40.50.10470:FF:000006">
    <property type="entry name" value="Methylthioribose-1-phosphate isomerase"/>
    <property type="match status" value="1"/>
</dbReference>
<dbReference type="Gene3D" id="1.20.120.420">
    <property type="entry name" value="translation initiation factor eif-2b, domain 1"/>
    <property type="match status" value="1"/>
</dbReference>
<dbReference type="Gene3D" id="3.40.50.10470">
    <property type="entry name" value="Translation initiation factor eif-2b, domain 2"/>
    <property type="match status" value="1"/>
</dbReference>
<dbReference type="HAMAP" id="MF_01678">
    <property type="entry name" value="Salvage_MtnA"/>
    <property type="match status" value="1"/>
</dbReference>
<dbReference type="InterPro" id="IPR000649">
    <property type="entry name" value="IF-2B-related"/>
</dbReference>
<dbReference type="InterPro" id="IPR005251">
    <property type="entry name" value="IF-M1Pi"/>
</dbReference>
<dbReference type="InterPro" id="IPR042529">
    <property type="entry name" value="IF_2B-like_C"/>
</dbReference>
<dbReference type="InterPro" id="IPR011559">
    <property type="entry name" value="Initiation_fac_2B_a/b/d"/>
</dbReference>
<dbReference type="InterPro" id="IPR027363">
    <property type="entry name" value="M1Pi_N"/>
</dbReference>
<dbReference type="InterPro" id="IPR037171">
    <property type="entry name" value="NagB/RpiA_transferase-like"/>
</dbReference>
<dbReference type="NCBIfam" id="TIGR00524">
    <property type="entry name" value="eIF-2B_rel"/>
    <property type="match status" value="1"/>
</dbReference>
<dbReference type="NCBIfam" id="NF004326">
    <property type="entry name" value="PRK05720.1"/>
    <property type="match status" value="1"/>
</dbReference>
<dbReference type="NCBIfam" id="TIGR00512">
    <property type="entry name" value="salvage_mtnA"/>
    <property type="match status" value="1"/>
</dbReference>
<dbReference type="PANTHER" id="PTHR43475">
    <property type="entry name" value="METHYLTHIORIBOSE-1-PHOSPHATE ISOMERASE"/>
    <property type="match status" value="1"/>
</dbReference>
<dbReference type="PANTHER" id="PTHR43475:SF1">
    <property type="entry name" value="METHYLTHIORIBOSE-1-PHOSPHATE ISOMERASE"/>
    <property type="match status" value="1"/>
</dbReference>
<dbReference type="Pfam" id="PF01008">
    <property type="entry name" value="IF-2B"/>
    <property type="match status" value="1"/>
</dbReference>
<dbReference type="SUPFAM" id="SSF100950">
    <property type="entry name" value="NagB/RpiA/CoA transferase-like"/>
    <property type="match status" value="1"/>
</dbReference>
<name>MTNA_LEPBJ</name>